<name>SYFB_LACLA</name>
<organism>
    <name type="scientific">Lactococcus lactis subsp. lactis (strain IL1403)</name>
    <name type="common">Streptococcus lactis</name>
    <dbReference type="NCBI Taxonomy" id="272623"/>
    <lineage>
        <taxon>Bacteria</taxon>
        <taxon>Bacillati</taxon>
        <taxon>Bacillota</taxon>
        <taxon>Bacilli</taxon>
        <taxon>Lactobacillales</taxon>
        <taxon>Streptococcaceae</taxon>
        <taxon>Lactococcus</taxon>
    </lineage>
</organism>
<dbReference type="EC" id="6.1.1.20" evidence="1"/>
<dbReference type="EMBL" id="AE005176">
    <property type="protein sequence ID" value="AAK06026.1"/>
    <property type="molecule type" value="Genomic_DNA"/>
</dbReference>
<dbReference type="PIR" id="H86865">
    <property type="entry name" value="H86865"/>
</dbReference>
<dbReference type="RefSeq" id="NP_268085.1">
    <property type="nucleotide sequence ID" value="NC_002662.1"/>
</dbReference>
<dbReference type="RefSeq" id="WP_010906202.1">
    <property type="nucleotide sequence ID" value="NC_002662.1"/>
</dbReference>
<dbReference type="SMR" id="Q9CEB5"/>
<dbReference type="PaxDb" id="272623-L0355"/>
<dbReference type="EnsemblBacteria" id="AAK06026">
    <property type="protein sequence ID" value="AAK06026"/>
    <property type="gene ID" value="L0355"/>
</dbReference>
<dbReference type="KEGG" id="lla:L0355"/>
<dbReference type="PATRIC" id="fig|272623.7.peg.2072"/>
<dbReference type="eggNOG" id="COG0072">
    <property type="taxonomic scope" value="Bacteria"/>
</dbReference>
<dbReference type="eggNOG" id="COG0073">
    <property type="taxonomic scope" value="Bacteria"/>
</dbReference>
<dbReference type="HOGENOM" id="CLU_016891_0_0_9"/>
<dbReference type="OrthoDB" id="9805455at2"/>
<dbReference type="Proteomes" id="UP000002196">
    <property type="component" value="Chromosome"/>
</dbReference>
<dbReference type="GO" id="GO:0009328">
    <property type="term" value="C:phenylalanine-tRNA ligase complex"/>
    <property type="evidence" value="ECO:0007669"/>
    <property type="project" value="TreeGrafter"/>
</dbReference>
<dbReference type="GO" id="GO:0005524">
    <property type="term" value="F:ATP binding"/>
    <property type="evidence" value="ECO:0007669"/>
    <property type="project" value="UniProtKB-UniRule"/>
</dbReference>
<dbReference type="GO" id="GO:0140096">
    <property type="term" value="F:catalytic activity, acting on a protein"/>
    <property type="evidence" value="ECO:0007669"/>
    <property type="project" value="UniProtKB-ARBA"/>
</dbReference>
<dbReference type="GO" id="GO:0000287">
    <property type="term" value="F:magnesium ion binding"/>
    <property type="evidence" value="ECO:0007669"/>
    <property type="project" value="UniProtKB-UniRule"/>
</dbReference>
<dbReference type="GO" id="GO:0004826">
    <property type="term" value="F:phenylalanine-tRNA ligase activity"/>
    <property type="evidence" value="ECO:0007669"/>
    <property type="project" value="UniProtKB-UniRule"/>
</dbReference>
<dbReference type="GO" id="GO:0016740">
    <property type="term" value="F:transferase activity"/>
    <property type="evidence" value="ECO:0007669"/>
    <property type="project" value="UniProtKB-ARBA"/>
</dbReference>
<dbReference type="GO" id="GO:0000049">
    <property type="term" value="F:tRNA binding"/>
    <property type="evidence" value="ECO:0007669"/>
    <property type="project" value="UniProtKB-KW"/>
</dbReference>
<dbReference type="GO" id="GO:0006432">
    <property type="term" value="P:phenylalanyl-tRNA aminoacylation"/>
    <property type="evidence" value="ECO:0007669"/>
    <property type="project" value="UniProtKB-UniRule"/>
</dbReference>
<dbReference type="CDD" id="cd00769">
    <property type="entry name" value="PheRS_beta_core"/>
    <property type="match status" value="1"/>
</dbReference>
<dbReference type="CDD" id="cd02796">
    <property type="entry name" value="tRNA_bind_bactPheRS"/>
    <property type="match status" value="1"/>
</dbReference>
<dbReference type="FunFam" id="2.40.50.140:FF:000045">
    <property type="entry name" value="Phenylalanine--tRNA ligase beta subunit"/>
    <property type="match status" value="1"/>
</dbReference>
<dbReference type="FunFam" id="3.30.56.10:FF:000002">
    <property type="entry name" value="Phenylalanine--tRNA ligase beta subunit"/>
    <property type="match status" value="1"/>
</dbReference>
<dbReference type="FunFam" id="3.30.70.380:FF:000001">
    <property type="entry name" value="Phenylalanine--tRNA ligase beta subunit"/>
    <property type="match status" value="1"/>
</dbReference>
<dbReference type="FunFam" id="3.30.930.10:FF:000022">
    <property type="entry name" value="Phenylalanine--tRNA ligase beta subunit"/>
    <property type="match status" value="1"/>
</dbReference>
<dbReference type="FunFam" id="3.50.40.10:FF:000001">
    <property type="entry name" value="Phenylalanine--tRNA ligase beta subunit"/>
    <property type="match status" value="1"/>
</dbReference>
<dbReference type="Gene3D" id="3.30.56.10">
    <property type="match status" value="2"/>
</dbReference>
<dbReference type="Gene3D" id="3.30.930.10">
    <property type="entry name" value="Bira Bifunctional Protein, Domain 2"/>
    <property type="match status" value="1"/>
</dbReference>
<dbReference type="Gene3D" id="3.30.70.380">
    <property type="entry name" value="Ferrodoxin-fold anticodon-binding domain"/>
    <property type="match status" value="1"/>
</dbReference>
<dbReference type="Gene3D" id="2.40.50.140">
    <property type="entry name" value="Nucleic acid-binding proteins"/>
    <property type="match status" value="1"/>
</dbReference>
<dbReference type="Gene3D" id="3.50.40.10">
    <property type="entry name" value="Phenylalanyl-trna Synthetase, Chain B, domain 3"/>
    <property type="match status" value="1"/>
</dbReference>
<dbReference type="HAMAP" id="MF_00283">
    <property type="entry name" value="Phe_tRNA_synth_beta1"/>
    <property type="match status" value="1"/>
</dbReference>
<dbReference type="InterPro" id="IPR045864">
    <property type="entry name" value="aa-tRNA-synth_II/BPL/LPL"/>
</dbReference>
<dbReference type="InterPro" id="IPR005146">
    <property type="entry name" value="B3/B4_tRNA-bd"/>
</dbReference>
<dbReference type="InterPro" id="IPR009061">
    <property type="entry name" value="DNA-bd_dom_put_sf"/>
</dbReference>
<dbReference type="InterPro" id="IPR005121">
    <property type="entry name" value="Fdx_antiC-bd"/>
</dbReference>
<dbReference type="InterPro" id="IPR036690">
    <property type="entry name" value="Fdx_antiC-bd_sf"/>
</dbReference>
<dbReference type="InterPro" id="IPR012340">
    <property type="entry name" value="NA-bd_OB-fold"/>
</dbReference>
<dbReference type="InterPro" id="IPR045060">
    <property type="entry name" value="Phe-tRNA-ligase_IIc_bsu"/>
</dbReference>
<dbReference type="InterPro" id="IPR004532">
    <property type="entry name" value="Phe-tRNA-ligase_IIc_bsu_bact"/>
</dbReference>
<dbReference type="InterPro" id="IPR020825">
    <property type="entry name" value="Phe-tRNA_synthase-like_B3/B4"/>
</dbReference>
<dbReference type="InterPro" id="IPR041616">
    <property type="entry name" value="PheRS_beta_core"/>
</dbReference>
<dbReference type="InterPro" id="IPR002547">
    <property type="entry name" value="tRNA-bd_dom"/>
</dbReference>
<dbReference type="InterPro" id="IPR033714">
    <property type="entry name" value="tRNA_bind_bactPheRS"/>
</dbReference>
<dbReference type="InterPro" id="IPR005147">
    <property type="entry name" value="tRNA_synthase_B5-dom"/>
</dbReference>
<dbReference type="NCBIfam" id="TIGR00472">
    <property type="entry name" value="pheT_bact"/>
    <property type="match status" value="1"/>
</dbReference>
<dbReference type="NCBIfam" id="NF045760">
    <property type="entry name" value="YtpR"/>
    <property type="match status" value="1"/>
</dbReference>
<dbReference type="PANTHER" id="PTHR10947:SF0">
    <property type="entry name" value="PHENYLALANINE--TRNA LIGASE BETA SUBUNIT"/>
    <property type="match status" value="1"/>
</dbReference>
<dbReference type="PANTHER" id="PTHR10947">
    <property type="entry name" value="PHENYLALANYL-TRNA SYNTHETASE BETA CHAIN AND LEUCINE-RICH REPEAT-CONTAINING PROTEIN 47"/>
    <property type="match status" value="1"/>
</dbReference>
<dbReference type="Pfam" id="PF03483">
    <property type="entry name" value="B3_4"/>
    <property type="match status" value="1"/>
</dbReference>
<dbReference type="Pfam" id="PF03484">
    <property type="entry name" value="B5"/>
    <property type="match status" value="1"/>
</dbReference>
<dbReference type="Pfam" id="PF03147">
    <property type="entry name" value="FDX-ACB"/>
    <property type="match status" value="1"/>
</dbReference>
<dbReference type="Pfam" id="PF01588">
    <property type="entry name" value="tRNA_bind"/>
    <property type="match status" value="1"/>
</dbReference>
<dbReference type="Pfam" id="PF17759">
    <property type="entry name" value="tRNA_synthFbeta"/>
    <property type="match status" value="1"/>
</dbReference>
<dbReference type="SMART" id="SM00873">
    <property type="entry name" value="B3_4"/>
    <property type="match status" value="1"/>
</dbReference>
<dbReference type="SMART" id="SM00874">
    <property type="entry name" value="B5"/>
    <property type="match status" value="1"/>
</dbReference>
<dbReference type="SMART" id="SM00896">
    <property type="entry name" value="FDX-ACB"/>
    <property type="match status" value="1"/>
</dbReference>
<dbReference type="SUPFAM" id="SSF54991">
    <property type="entry name" value="Anticodon-binding domain of PheRS"/>
    <property type="match status" value="1"/>
</dbReference>
<dbReference type="SUPFAM" id="SSF55681">
    <property type="entry name" value="Class II aaRS and biotin synthetases"/>
    <property type="match status" value="1"/>
</dbReference>
<dbReference type="SUPFAM" id="SSF50249">
    <property type="entry name" value="Nucleic acid-binding proteins"/>
    <property type="match status" value="1"/>
</dbReference>
<dbReference type="SUPFAM" id="SSF56037">
    <property type="entry name" value="PheT/TilS domain"/>
    <property type="match status" value="1"/>
</dbReference>
<dbReference type="SUPFAM" id="SSF46955">
    <property type="entry name" value="Putative DNA-binding domain"/>
    <property type="match status" value="1"/>
</dbReference>
<dbReference type="PROSITE" id="PS51483">
    <property type="entry name" value="B5"/>
    <property type="match status" value="1"/>
</dbReference>
<dbReference type="PROSITE" id="PS51447">
    <property type="entry name" value="FDX_ACB"/>
    <property type="match status" value="1"/>
</dbReference>
<dbReference type="PROSITE" id="PS50886">
    <property type="entry name" value="TRBD"/>
    <property type="match status" value="1"/>
</dbReference>
<gene>
    <name evidence="1" type="primary">pheT</name>
    <name type="ordered locus">LL1928</name>
    <name type="ORF">L0355</name>
</gene>
<comment type="catalytic activity">
    <reaction evidence="1">
        <text>tRNA(Phe) + L-phenylalanine + ATP = L-phenylalanyl-tRNA(Phe) + AMP + diphosphate + H(+)</text>
        <dbReference type="Rhea" id="RHEA:19413"/>
        <dbReference type="Rhea" id="RHEA-COMP:9668"/>
        <dbReference type="Rhea" id="RHEA-COMP:9699"/>
        <dbReference type="ChEBI" id="CHEBI:15378"/>
        <dbReference type="ChEBI" id="CHEBI:30616"/>
        <dbReference type="ChEBI" id="CHEBI:33019"/>
        <dbReference type="ChEBI" id="CHEBI:58095"/>
        <dbReference type="ChEBI" id="CHEBI:78442"/>
        <dbReference type="ChEBI" id="CHEBI:78531"/>
        <dbReference type="ChEBI" id="CHEBI:456215"/>
        <dbReference type="EC" id="6.1.1.20"/>
    </reaction>
</comment>
<comment type="cofactor">
    <cofactor evidence="1">
        <name>Mg(2+)</name>
        <dbReference type="ChEBI" id="CHEBI:18420"/>
    </cofactor>
    <text evidence="1">Binds 2 magnesium ions per tetramer.</text>
</comment>
<comment type="subunit">
    <text evidence="1">Tetramer of two alpha and two beta subunits.</text>
</comment>
<comment type="subcellular location">
    <subcellularLocation>
        <location evidence="1">Cytoplasm</location>
    </subcellularLocation>
</comment>
<comment type="similarity">
    <text evidence="1">Belongs to the phenylalanyl-tRNA synthetase beta subunit family. Type 1 subfamily.</text>
</comment>
<feature type="chain" id="PRO_0000126898" description="Phenylalanine--tRNA ligase beta subunit">
    <location>
        <begin position="1"/>
        <end position="797"/>
    </location>
</feature>
<feature type="domain" description="tRNA-binding" evidence="1">
    <location>
        <begin position="40"/>
        <end position="154"/>
    </location>
</feature>
<feature type="domain" description="B5" evidence="1">
    <location>
        <begin position="407"/>
        <end position="482"/>
    </location>
</feature>
<feature type="domain" description="FDX-ACB" evidence="1">
    <location>
        <begin position="704"/>
        <end position="797"/>
    </location>
</feature>
<feature type="binding site" evidence="1">
    <location>
        <position position="460"/>
    </location>
    <ligand>
        <name>Mg(2+)</name>
        <dbReference type="ChEBI" id="CHEBI:18420"/>
        <note>shared with alpha subunit</note>
    </ligand>
</feature>
<feature type="binding site" evidence="1">
    <location>
        <position position="466"/>
    </location>
    <ligand>
        <name>Mg(2+)</name>
        <dbReference type="ChEBI" id="CHEBI:18420"/>
        <note>shared with alpha subunit</note>
    </ligand>
</feature>
<feature type="binding site" evidence="1">
    <location>
        <position position="469"/>
    </location>
    <ligand>
        <name>Mg(2+)</name>
        <dbReference type="ChEBI" id="CHEBI:18420"/>
        <note>shared with alpha subunit</note>
    </ligand>
</feature>
<feature type="binding site" evidence="1">
    <location>
        <position position="470"/>
    </location>
    <ligand>
        <name>Mg(2+)</name>
        <dbReference type="ChEBI" id="CHEBI:18420"/>
        <note>shared with alpha subunit</note>
    </ligand>
</feature>
<proteinExistence type="inferred from homology"/>
<protein>
    <recommendedName>
        <fullName evidence="1">Phenylalanine--tRNA ligase beta subunit</fullName>
        <ecNumber evidence="1">6.1.1.20</ecNumber>
    </recommendedName>
    <alternativeName>
        <fullName evidence="1">Phenylalanyl-tRNA synthetase beta subunit</fullName>
        <shortName evidence="1">PheRS</shortName>
    </alternativeName>
</protein>
<sequence>MQVSYKWLKELVPNLRATSAELEQKMSTSGIEVEGVTSPMEGLSKLVVGEILSSEDIPDTHLHITQVNVGAEESLQIVCGAPNVRVGMKVIVALVGARIADNYKIKKGKIRGVESLGMLCALDEIGIDEKINPMKHEDGIFEMPADAKVGDSIFSYLDMDDEIIELSITPNRADALSMHGAAWEVGAIYGLPVQLEKKDLVEASESAASKIAVKVETDKVPTYKIRLIEGVKIAKSPQWLQNRLMNAGVKPINNVVDVTNYVLMAFGQPLHSFDFSKFGSDEILVRQAKAGEKMTTLDHVERELDDSDIVVTANGLPVALGGVMGGADSEITDETTSVALEAALFDGTSIRKTSQKFALRSEASSRFEKGINEGTVREALDFAAAMIVELAGGKVLSGVVESNDYQPILPKVSITLSRVNSALGTDLSLETVEKIFVQLGFGVEVEGEKFTCEIPSRRWDIHIEADLVEEVARIYGYDNLPSTLPSSQNAGELTQMQKFRRTVRTGLESSGLNEVIGYSLVTPEKATEFVGQLETTTLMMPMTEDRQTLRANMIPGLLDIVNYNQNRKNADVAIYEIGNIFLPNPDDIRPIEVPNLAFAISGNVVDKSYNGQAVPVDFYYAKGIVENLLEAYKEVEFIPSNNQAAMHPGRTAVIKINGRVAGFVGQIHPATAKKYDIAETYVAGLDMQVMLEELPAQTIFTDIPKVQAVHRDIALLIDAEVTHAQIVSVIKSSRIKTLSQVELFDIYQGKNLPAGKKSMAYSLTFQPVENTMTDEEITAAVNKITKNLVEKLDIEIR</sequence>
<keyword id="KW-0030">Aminoacyl-tRNA synthetase</keyword>
<keyword id="KW-0067">ATP-binding</keyword>
<keyword id="KW-0963">Cytoplasm</keyword>
<keyword id="KW-0436">Ligase</keyword>
<keyword id="KW-0460">Magnesium</keyword>
<keyword id="KW-0479">Metal-binding</keyword>
<keyword id="KW-0547">Nucleotide-binding</keyword>
<keyword id="KW-0648">Protein biosynthesis</keyword>
<keyword id="KW-1185">Reference proteome</keyword>
<keyword id="KW-0694">RNA-binding</keyword>
<keyword id="KW-0820">tRNA-binding</keyword>
<reference key="1">
    <citation type="journal article" date="2001" name="Genome Res.">
        <title>The complete genome sequence of the lactic acid bacterium Lactococcus lactis ssp. lactis IL1403.</title>
        <authorList>
            <person name="Bolotin A."/>
            <person name="Wincker P."/>
            <person name="Mauger S."/>
            <person name="Jaillon O."/>
            <person name="Malarme K."/>
            <person name="Weissenbach J."/>
            <person name="Ehrlich S.D."/>
            <person name="Sorokin A."/>
        </authorList>
    </citation>
    <scope>NUCLEOTIDE SEQUENCE [LARGE SCALE GENOMIC DNA]</scope>
    <source>
        <strain>IL1403</strain>
    </source>
</reference>
<evidence type="ECO:0000255" key="1">
    <source>
        <dbReference type="HAMAP-Rule" id="MF_00283"/>
    </source>
</evidence>
<accession>Q9CEB5</accession>